<comment type="function">
    <text evidence="1">Plays an essential role in the initiation and regulation of chromosomal replication. ATP-DnaA binds to the origin of replication (oriC) to initiate formation of the DNA replication initiation complex once per cell cycle. Binds the DnaA box (a 9 base pair repeat at the origin) and separates the double-stranded (ds)DNA. Forms a right-handed helical filament on oriC DNA; dsDNA binds to the exterior of the filament while single-stranded (ss)DNA is stabiized in the filament's interior. The ATP-DnaA-oriC complex binds and stabilizes one strand of the AT-rich DNA unwinding element (DUE), permitting loading of DNA polymerase. After initiation quickly degrades to an ADP-DnaA complex that is not apt for DNA replication. Binds acidic phospholipids.</text>
</comment>
<comment type="subunit">
    <text evidence="1">Oligomerizes as a right-handed, spiral filament on DNA at oriC.</text>
</comment>
<comment type="subcellular location">
    <subcellularLocation>
        <location evidence="1">Cytoplasm</location>
    </subcellularLocation>
</comment>
<comment type="domain">
    <text evidence="1">Domain I is involved in oligomerization and binding regulators, domain II is flexibile and of varying length in different bacteria, domain III forms the AAA+ region, while domain IV binds dsDNA.</text>
</comment>
<comment type="similarity">
    <text evidence="1">Belongs to the DnaA family.</text>
</comment>
<name>DNAA_PHOPR</name>
<organism>
    <name type="scientific">Photobacterium profundum (strain SS9)</name>
    <dbReference type="NCBI Taxonomy" id="298386"/>
    <lineage>
        <taxon>Bacteria</taxon>
        <taxon>Pseudomonadati</taxon>
        <taxon>Pseudomonadota</taxon>
        <taxon>Gammaproteobacteria</taxon>
        <taxon>Vibrionales</taxon>
        <taxon>Vibrionaceae</taxon>
        <taxon>Photobacterium</taxon>
    </lineage>
</organism>
<accession>Q6LW50</accession>
<keyword id="KW-0067">ATP-binding</keyword>
<keyword id="KW-0963">Cytoplasm</keyword>
<keyword id="KW-0235">DNA replication</keyword>
<keyword id="KW-0238">DNA-binding</keyword>
<keyword id="KW-0446">Lipid-binding</keyword>
<keyword id="KW-0547">Nucleotide-binding</keyword>
<keyword id="KW-1185">Reference proteome</keyword>
<feature type="chain" id="PRO_0000114230" description="Chromosomal replication initiator protein DnaA">
    <location>
        <begin position="1"/>
        <end position="474"/>
    </location>
</feature>
<feature type="region of interest" description="Domain I, interacts with DnaA modulators" evidence="1">
    <location>
        <begin position="1"/>
        <end position="90"/>
    </location>
</feature>
<feature type="region of interest" description="Domain II" evidence="1">
    <location>
        <begin position="91"/>
        <end position="137"/>
    </location>
</feature>
<feature type="region of interest" description="Disordered" evidence="2">
    <location>
        <begin position="112"/>
        <end position="137"/>
    </location>
</feature>
<feature type="region of interest" description="Domain III, AAA+ region" evidence="1">
    <location>
        <begin position="138"/>
        <end position="354"/>
    </location>
</feature>
<feature type="region of interest" description="Domain IV, binds dsDNA" evidence="1">
    <location>
        <begin position="355"/>
        <end position="474"/>
    </location>
</feature>
<feature type="compositionally biased region" description="Polar residues" evidence="2">
    <location>
        <begin position="128"/>
        <end position="137"/>
    </location>
</feature>
<feature type="binding site" evidence="1">
    <location>
        <position position="182"/>
    </location>
    <ligand>
        <name>ATP</name>
        <dbReference type="ChEBI" id="CHEBI:30616"/>
    </ligand>
</feature>
<feature type="binding site" evidence="1">
    <location>
        <position position="184"/>
    </location>
    <ligand>
        <name>ATP</name>
        <dbReference type="ChEBI" id="CHEBI:30616"/>
    </ligand>
</feature>
<feature type="binding site" evidence="1">
    <location>
        <position position="185"/>
    </location>
    <ligand>
        <name>ATP</name>
        <dbReference type="ChEBI" id="CHEBI:30616"/>
    </ligand>
</feature>
<feature type="binding site" evidence="1">
    <location>
        <position position="186"/>
    </location>
    <ligand>
        <name>ATP</name>
        <dbReference type="ChEBI" id="CHEBI:30616"/>
    </ligand>
</feature>
<reference key="1">
    <citation type="journal article" date="2005" name="Science">
        <title>Life at depth: Photobacterium profundum genome sequence and expression analysis.</title>
        <authorList>
            <person name="Vezzi A."/>
            <person name="Campanaro S."/>
            <person name="D'Angelo M."/>
            <person name="Simonato F."/>
            <person name="Vitulo N."/>
            <person name="Lauro F.M."/>
            <person name="Cestaro A."/>
            <person name="Malacrida G."/>
            <person name="Simionati B."/>
            <person name="Cannata N."/>
            <person name="Romualdi C."/>
            <person name="Bartlett D.H."/>
            <person name="Valle G."/>
        </authorList>
    </citation>
    <scope>NUCLEOTIDE SEQUENCE [LARGE SCALE GENOMIC DNA]</scope>
    <source>
        <strain>ATCC BAA-1253 / SS9</strain>
    </source>
</reference>
<gene>
    <name evidence="1" type="primary">dnaA</name>
    <name type="ordered locus">PBPRA0008</name>
</gene>
<proteinExistence type="inferred from homology"/>
<dbReference type="EMBL" id="CR378663">
    <property type="protein sequence ID" value="CAG18463.1"/>
    <property type="molecule type" value="Genomic_DNA"/>
</dbReference>
<dbReference type="RefSeq" id="WP_011216844.1">
    <property type="nucleotide sequence ID" value="NC_006370.1"/>
</dbReference>
<dbReference type="SMR" id="Q6LW50"/>
<dbReference type="STRING" id="298386.PBPRA0008"/>
<dbReference type="KEGG" id="ppr:PBPRA0008"/>
<dbReference type="eggNOG" id="COG0593">
    <property type="taxonomic scope" value="Bacteria"/>
</dbReference>
<dbReference type="HOGENOM" id="CLU_026910_0_1_6"/>
<dbReference type="Proteomes" id="UP000000593">
    <property type="component" value="Chromosome 1"/>
</dbReference>
<dbReference type="GO" id="GO:0005737">
    <property type="term" value="C:cytoplasm"/>
    <property type="evidence" value="ECO:0007669"/>
    <property type="project" value="UniProtKB-SubCell"/>
</dbReference>
<dbReference type="GO" id="GO:0005886">
    <property type="term" value="C:plasma membrane"/>
    <property type="evidence" value="ECO:0007669"/>
    <property type="project" value="TreeGrafter"/>
</dbReference>
<dbReference type="GO" id="GO:0005524">
    <property type="term" value="F:ATP binding"/>
    <property type="evidence" value="ECO:0007669"/>
    <property type="project" value="UniProtKB-UniRule"/>
</dbReference>
<dbReference type="GO" id="GO:0016887">
    <property type="term" value="F:ATP hydrolysis activity"/>
    <property type="evidence" value="ECO:0007669"/>
    <property type="project" value="InterPro"/>
</dbReference>
<dbReference type="GO" id="GO:0003688">
    <property type="term" value="F:DNA replication origin binding"/>
    <property type="evidence" value="ECO:0007669"/>
    <property type="project" value="UniProtKB-UniRule"/>
</dbReference>
<dbReference type="GO" id="GO:0008289">
    <property type="term" value="F:lipid binding"/>
    <property type="evidence" value="ECO:0007669"/>
    <property type="project" value="UniProtKB-KW"/>
</dbReference>
<dbReference type="GO" id="GO:0006270">
    <property type="term" value="P:DNA replication initiation"/>
    <property type="evidence" value="ECO:0007669"/>
    <property type="project" value="UniProtKB-UniRule"/>
</dbReference>
<dbReference type="GO" id="GO:0006275">
    <property type="term" value="P:regulation of DNA replication"/>
    <property type="evidence" value="ECO:0007669"/>
    <property type="project" value="UniProtKB-UniRule"/>
</dbReference>
<dbReference type="CDD" id="cd00009">
    <property type="entry name" value="AAA"/>
    <property type="match status" value="1"/>
</dbReference>
<dbReference type="CDD" id="cd06571">
    <property type="entry name" value="Bac_DnaA_C"/>
    <property type="match status" value="1"/>
</dbReference>
<dbReference type="FunFam" id="1.10.1750.10:FF:000001">
    <property type="entry name" value="Chromosomal replication initiator protein DnaA"/>
    <property type="match status" value="1"/>
</dbReference>
<dbReference type="FunFam" id="1.10.8.60:FF:000003">
    <property type="entry name" value="Chromosomal replication initiator protein DnaA"/>
    <property type="match status" value="1"/>
</dbReference>
<dbReference type="FunFam" id="3.30.300.180:FF:000001">
    <property type="entry name" value="Chromosomal replication initiator protein DnaA"/>
    <property type="match status" value="1"/>
</dbReference>
<dbReference type="FunFam" id="3.40.50.300:FF:000103">
    <property type="entry name" value="Chromosomal replication initiator protein DnaA"/>
    <property type="match status" value="1"/>
</dbReference>
<dbReference type="Gene3D" id="1.10.1750.10">
    <property type="match status" value="1"/>
</dbReference>
<dbReference type="Gene3D" id="1.10.8.60">
    <property type="match status" value="1"/>
</dbReference>
<dbReference type="Gene3D" id="3.30.300.180">
    <property type="match status" value="1"/>
</dbReference>
<dbReference type="Gene3D" id="3.40.50.300">
    <property type="entry name" value="P-loop containing nucleotide triphosphate hydrolases"/>
    <property type="match status" value="1"/>
</dbReference>
<dbReference type="HAMAP" id="MF_00377">
    <property type="entry name" value="DnaA_bact"/>
    <property type="match status" value="1"/>
</dbReference>
<dbReference type="InterPro" id="IPR003593">
    <property type="entry name" value="AAA+_ATPase"/>
</dbReference>
<dbReference type="InterPro" id="IPR001957">
    <property type="entry name" value="Chromosome_initiator_DnaA"/>
</dbReference>
<dbReference type="InterPro" id="IPR020591">
    <property type="entry name" value="Chromosome_initiator_DnaA-like"/>
</dbReference>
<dbReference type="InterPro" id="IPR018312">
    <property type="entry name" value="Chromosome_initiator_DnaA_CS"/>
</dbReference>
<dbReference type="InterPro" id="IPR013159">
    <property type="entry name" value="DnaA_C"/>
</dbReference>
<dbReference type="InterPro" id="IPR013317">
    <property type="entry name" value="DnaA_dom"/>
</dbReference>
<dbReference type="InterPro" id="IPR024633">
    <property type="entry name" value="DnaA_N_dom"/>
</dbReference>
<dbReference type="InterPro" id="IPR038454">
    <property type="entry name" value="DnaA_N_sf"/>
</dbReference>
<dbReference type="InterPro" id="IPR055199">
    <property type="entry name" value="Hda_lid"/>
</dbReference>
<dbReference type="InterPro" id="IPR027417">
    <property type="entry name" value="P-loop_NTPase"/>
</dbReference>
<dbReference type="InterPro" id="IPR010921">
    <property type="entry name" value="Trp_repressor/repl_initiator"/>
</dbReference>
<dbReference type="NCBIfam" id="TIGR00362">
    <property type="entry name" value="DnaA"/>
    <property type="match status" value="1"/>
</dbReference>
<dbReference type="PANTHER" id="PTHR30050">
    <property type="entry name" value="CHROMOSOMAL REPLICATION INITIATOR PROTEIN DNAA"/>
    <property type="match status" value="1"/>
</dbReference>
<dbReference type="PANTHER" id="PTHR30050:SF2">
    <property type="entry name" value="CHROMOSOMAL REPLICATION INITIATOR PROTEIN DNAA"/>
    <property type="match status" value="1"/>
</dbReference>
<dbReference type="Pfam" id="PF00308">
    <property type="entry name" value="Bac_DnaA"/>
    <property type="match status" value="1"/>
</dbReference>
<dbReference type="Pfam" id="PF08299">
    <property type="entry name" value="Bac_DnaA_C"/>
    <property type="match status" value="1"/>
</dbReference>
<dbReference type="Pfam" id="PF11638">
    <property type="entry name" value="DnaA_N"/>
    <property type="match status" value="1"/>
</dbReference>
<dbReference type="Pfam" id="PF22688">
    <property type="entry name" value="Hda_lid"/>
    <property type="match status" value="1"/>
</dbReference>
<dbReference type="PRINTS" id="PR00051">
    <property type="entry name" value="DNAA"/>
</dbReference>
<dbReference type="SMART" id="SM00382">
    <property type="entry name" value="AAA"/>
    <property type="match status" value="1"/>
</dbReference>
<dbReference type="SMART" id="SM00760">
    <property type="entry name" value="Bac_DnaA_C"/>
    <property type="match status" value="1"/>
</dbReference>
<dbReference type="SUPFAM" id="SSF52540">
    <property type="entry name" value="P-loop containing nucleoside triphosphate hydrolases"/>
    <property type="match status" value="1"/>
</dbReference>
<dbReference type="SUPFAM" id="SSF48295">
    <property type="entry name" value="TrpR-like"/>
    <property type="match status" value="1"/>
</dbReference>
<dbReference type="PROSITE" id="PS01008">
    <property type="entry name" value="DNAA"/>
    <property type="match status" value="1"/>
</dbReference>
<sequence>MSSSLWLQCLQRLQEELPATEFSMWVRPLQAELKDNTLTLFAPNRFVLDWVRDKYLNNINRLLNEFCGTDIPILRFEVGSRQVVVPSSQIIAPAAPAVTLAPRPLPATRILQDDAPSRSWEPAPSPVQPESKSGYRSNVNPKHNFNNFVEGKSNQLGLAACRQVSDNPGAAYNPLFLYGGTGLGKTHLLHAVGNAIADRKPNARVVYMHSERFVQDMVKALQNNAIEEFKRYYRSVDALLIDDIQFFANKERSQEEFFHTFNALLEGNQQIILTSDRYPREINGVEDRLKSRFGWGLTVAIEPPELETRVAILMKKAENHNIRLPDEVAFFIAKRLRSNVRELEGALNRVIANANFTGRAITIDFVREALRDLLALQEKLVTIDNIQKTVAEYYKIKMSDMLSKRRSRSVARPRQMAMALAKELTNHSLPEIGDAFGGRDHTTVLHACRKIVQLREESHDIKEDYSNLIRTLST</sequence>
<evidence type="ECO:0000255" key="1">
    <source>
        <dbReference type="HAMAP-Rule" id="MF_00377"/>
    </source>
</evidence>
<evidence type="ECO:0000256" key="2">
    <source>
        <dbReference type="SAM" id="MobiDB-lite"/>
    </source>
</evidence>
<protein>
    <recommendedName>
        <fullName evidence="1">Chromosomal replication initiator protein DnaA</fullName>
    </recommendedName>
</protein>